<organism>
    <name type="scientific">Aromatoleum aromaticum (strain DSM 19018 / LMG 30748 / EbN1)</name>
    <name type="common">Azoarcus sp. (strain EbN1)</name>
    <dbReference type="NCBI Taxonomy" id="76114"/>
    <lineage>
        <taxon>Bacteria</taxon>
        <taxon>Pseudomonadati</taxon>
        <taxon>Pseudomonadota</taxon>
        <taxon>Betaproteobacteria</taxon>
        <taxon>Rhodocyclales</taxon>
        <taxon>Rhodocyclaceae</taxon>
        <taxon>Aromatoleum</taxon>
    </lineage>
</organism>
<keyword id="KW-1185">Reference proteome</keyword>
<keyword id="KW-0687">Ribonucleoprotein</keyword>
<keyword id="KW-0689">Ribosomal protein</keyword>
<keyword id="KW-0694">RNA-binding</keyword>
<keyword id="KW-0699">rRNA-binding</keyword>
<evidence type="ECO:0000255" key="1">
    <source>
        <dbReference type="HAMAP-Rule" id="MF_01365"/>
    </source>
</evidence>
<evidence type="ECO:0000305" key="2"/>
<sequence>MSRVAKNPVAIPQGVEITIGADEVSVKGPLGAVKQYIGNAVTLERDGDALVCKAREGVANSRAMSGTVRALVNNMVTGVTKGFERKLTLVGVGYRAQAQGDKLNLTLGFSHPVVHQMPAGVKVETPTQTEIVIKGIDKQQVGQVAAEVRAYREPEPYKGKGVRYSDEVVVLKETKKK</sequence>
<comment type="function">
    <text evidence="1">This protein binds to the 23S rRNA, and is important in its secondary structure. It is located near the subunit interface in the base of the L7/L12 stalk, and near the tRNA binding site of the peptidyltransferase center.</text>
</comment>
<comment type="subunit">
    <text evidence="1">Part of the 50S ribosomal subunit.</text>
</comment>
<comment type="similarity">
    <text evidence="1">Belongs to the universal ribosomal protein uL6 family.</text>
</comment>
<proteinExistence type="inferred from homology"/>
<dbReference type="EMBL" id="CR555306">
    <property type="protein sequence ID" value="CAI08297.1"/>
    <property type="molecule type" value="Genomic_DNA"/>
</dbReference>
<dbReference type="RefSeq" id="WP_011237987.1">
    <property type="nucleotide sequence ID" value="NC_006513.1"/>
</dbReference>
<dbReference type="SMR" id="Q5P317"/>
<dbReference type="STRING" id="76114.ebA3841"/>
<dbReference type="KEGG" id="eba:ebA3841"/>
<dbReference type="eggNOG" id="COG0097">
    <property type="taxonomic scope" value="Bacteria"/>
</dbReference>
<dbReference type="HOGENOM" id="CLU_065464_1_2_4"/>
<dbReference type="OrthoDB" id="9805007at2"/>
<dbReference type="Proteomes" id="UP000006552">
    <property type="component" value="Chromosome"/>
</dbReference>
<dbReference type="GO" id="GO:0022625">
    <property type="term" value="C:cytosolic large ribosomal subunit"/>
    <property type="evidence" value="ECO:0007669"/>
    <property type="project" value="TreeGrafter"/>
</dbReference>
<dbReference type="GO" id="GO:0019843">
    <property type="term" value="F:rRNA binding"/>
    <property type="evidence" value="ECO:0007669"/>
    <property type="project" value="UniProtKB-UniRule"/>
</dbReference>
<dbReference type="GO" id="GO:0003735">
    <property type="term" value="F:structural constituent of ribosome"/>
    <property type="evidence" value="ECO:0007669"/>
    <property type="project" value="InterPro"/>
</dbReference>
<dbReference type="GO" id="GO:0002181">
    <property type="term" value="P:cytoplasmic translation"/>
    <property type="evidence" value="ECO:0007669"/>
    <property type="project" value="TreeGrafter"/>
</dbReference>
<dbReference type="FunFam" id="3.90.930.12:FF:000001">
    <property type="entry name" value="50S ribosomal protein L6"/>
    <property type="match status" value="1"/>
</dbReference>
<dbReference type="Gene3D" id="3.90.930.12">
    <property type="entry name" value="Ribosomal protein L6, alpha-beta domain"/>
    <property type="match status" value="2"/>
</dbReference>
<dbReference type="HAMAP" id="MF_01365_B">
    <property type="entry name" value="Ribosomal_uL6_B"/>
    <property type="match status" value="1"/>
</dbReference>
<dbReference type="InterPro" id="IPR000702">
    <property type="entry name" value="Ribosomal_uL6-like"/>
</dbReference>
<dbReference type="InterPro" id="IPR036789">
    <property type="entry name" value="Ribosomal_uL6-like_a/b-dom_sf"/>
</dbReference>
<dbReference type="InterPro" id="IPR020040">
    <property type="entry name" value="Ribosomal_uL6_a/b-dom"/>
</dbReference>
<dbReference type="InterPro" id="IPR019906">
    <property type="entry name" value="Ribosomal_uL6_bac-type"/>
</dbReference>
<dbReference type="InterPro" id="IPR002358">
    <property type="entry name" value="Ribosomal_uL6_CS"/>
</dbReference>
<dbReference type="NCBIfam" id="TIGR03654">
    <property type="entry name" value="L6_bact"/>
    <property type="match status" value="1"/>
</dbReference>
<dbReference type="PANTHER" id="PTHR11655">
    <property type="entry name" value="60S/50S RIBOSOMAL PROTEIN L6/L9"/>
    <property type="match status" value="1"/>
</dbReference>
<dbReference type="PANTHER" id="PTHR11655:SF14">
    <property type="entry name" value="LARGE RIBOSOMAL SUBUNIT PROTEIN UL6M"/>
    <property type="match status" value="1"/>
</dbReference>
<dbReference type="Pfam" id="PF00347">
    <property type="entry name" value="Ribosomal_L6"/>
    <property type="match status" value="2"/>
</dbReference>
<dbReference type="PIRSF" id="PIRSF002162">
    <property type="entry name" value="Ribosomal_L6"/>
    <property type="match status" value="1"/>
</dbReference>
<dbReference type="PRINTS" id="PR00059">
    <property type="entry name" value="RIBOSOMALL6"/>
</dbReference>
<dbReference type="SUPFAM" id="SSF56053">
    <property type="entry name" value="Ribosomal protein L6"/>
    <property type="match status" value="2"/>
</dbReference>
<dbReference type="PROSITE" id="PS00525">
    <property type="entry name" value="RIBOSOMAL_L6_1"/>
    <property type="match status" value="1"/>
</dbReference>
<name>RL6_AROAE</name>
<reference key="1">
    <citation type="journal article" date="2005" name="Arch. Microbiol.">
        <title>The genome sequence of an anaerobic aromatic-degrading denitrifying bacterium, strain EbN1.</title>
        <authorList>
            <person name="Rabus R."/>
            <person name="Kube M."/>
            <person name="Heider J."/>
            <person name="Beck A."/>
            <person name="Heitmann K."/>
            <person name="Widdel F."/>
            <person name="Reinhardt R."/>
        </authorList>
    </citation>
    <scope>NUCLEOTIDE SEQUENCE [LARGE SCALE GENOMIC DNA]</scope>
    <source>
        <strain>DSM 19018 / LMG 30748 / EbN1</strain>
    </source>
</reference>
<feature type="chain" id="PRO_0000265212" description="Large ribosomal subunit protein uL6">
    <location>
        <begin position="1"/>
        <end position="177"/>
    </location>
</feature>
<gene>
    <name evidence="1" type="primary">rplF</name>
    <name type="ordered locus">AZOSEA21720</name>
    <name type="ORF">ebA3841</name>
</gene>
<protein>
    <recommendedName>
        <fullName evidence="1">Large ribosomal subunit protein uL6</fullName>
    </recommendedName>
    <alternativeName>
        <fullName evidence="2">50S ribosomal protein L6</fullName>
    </alternativeName>
</protein>
<accession>Q5P317</accession>